<sequence length="290" mass="32655">MHPINVRRDPSIPIYGLRQSILLNTRLQDCYVDSPALTNIWMARTCAKQNINAPAPATTSSWEVVRNPLIASSFSLVKLVLRRQLKNKCCPPPCKFGEGKLSKRLKHKDDSVMKATQQARKRNFISSKSKQPAGHRRPAGGIRESKESSKEKKLTVRQDLEDRYAEHVAATQALPQDSGTAAWKGRVLLPETQKRQQLSEDTLTIHGLPTEGYQALYHAVVEPMLWNPSGTPKRYSLELGKAIKQKLWEALCSQGAISEGAQRDRFPGRKQPGVHEEPVLKKWPKLKSKK</sequence>
<reference key="1">
    <citation type="journal article" date="2003" name="Genome Res.">
        <title>Reevaluating human gene annotation: a second-generation analysis of chromosome 22.</title>
        <authorList>
            <person name="Collins J.E."/>
            <person name="Goward M.E."/>
            <person name="Cole C.G."/>
            <person name="Smink L.J."/>
            <person name="Huckle E.J."/>
            <person name="Knowles S."/>
            <person name="Bye J.M."/>
            <person name="Beare D.M."/>
            <person name="Dunham I."/>
        </authorList>
    </citation>
    <scope>NUCLEOTIDE SEQUENCE [LARGE SCALE MRNA]</scope>
</reference>
<reference key="2">
    <citation type="journal article" date="2004" name="Genome Biol.">
        <title>A genome annotation-driven approach to cloning the human ORFeome.</title>
        <authorList>
            <person name="Collins J.E."/>
            <person name="Wright C.L."/>
            <person name="Edwards C.A."/>
            <person name="Davis M.P."/>
            <person name="Grinham J.A."/>
            <person name="Cole C.G."/>
            <person name="Goward M.E."/>
            <person name="Aguado B."/>
            <person name="Mallya M."/>
            <person name="Mokrab Y."/>
            <person name="Huckle E.J."/>
            <person name="Beare D.M."/>
            <person name="Dunham I."/>
        </authorList>
    </citation>
    <scope>NUCLEOTIDE SEQUENCE [LARGE SCALE MRNA]</scope>
    <source>
        <tissue>Testis</tissue>
    </source>
</reference>
<reference key="3">
    <citation type="journal article" date="1999" name="Nature">
        <title>The DNA sequence of human chromosome 22.</title>
        <authorList>
            <person name="Dunham I."/>
            <person name="Hunt A.R."/>
            <person name="Collins J.E."/>
            <person name="Bruskiewich R."/>
            <person name="Beare D.M."/>
            <person name="Clamp M."/>
            <person name="Smink L.J."/>
            <person name="Ainscough R."/>
            <person name="Almeida J.P."/>
            <person name="Babbage A.K."/>
            <person name="Bagguley C."/>
            <person name="Bailey J."/>
            <person name="Barlow K.F."/>
            <person name="Bates K.N."/>
            <person name="Beasley O.P."/>
            <person name="Bird C.P."/>
            <person name="Blakey S.E."/>
            <person name="Bridgeman A.M."/>
            <person name="Buck D."/>
            <person name="Burgess J."/>
            <person name="Burrill W.D."/>
            <person name="Burton J."/>
            <person name="Carder C."/>
            <person name="Carter N.P."/>
            <person name="Chen Y."/>
            <person name="Clark G."/>
            <person name="Clegg S.M."/>
            <person name="Cobley V.E."/>
            <person name="Cole C.G."/>
            <person name="Collier R.E."/>
            <person name="Connor R."/>
            <person name="Conroy D."/>
            <person name="Corby N.R."/>
            <person name="Coville G.J."/>
            <person name="Cox A.V."/>
            <person name="Davis J."/>
            <person name="Dawson E."/>
            <person name="Dhami P.D."/>
            <person name="Dockree C."/>
            <person name="Dodsworth S.J."/>
            <person name="Durbin R.M."/>
            <person name="Ellington A.G."/>
            <person name="Evans K.L."/>
            <person name="Fey J.M."/>
            <person name="Fleming K."/>
            <person name="French L."/>
            <person name="Garner A.A."/>
            <person name="Gilbert J.G.R."/>
            <person name="Goward M.E."/>
            <person name="Grafham D.V."/>
            <person name="Griffiths M.N.D."/>
            <person name="Hall C."/>
            <person name="Hall R.E."/>
            <person name="Hall-Tamlyn G."/>
            <person name="Heathcott R.W."/>
            <person name="Ho S."/>
            <person name="Holmes S."/>
            <person name="Hunt S.E."/>
            <person name="Jones M.C."/>
            <person name="Kershaw J."/>
            <person name="Kimberley A.M."/>
            <person name="King A."/>
            <person name="Laird G.K."/>
            <person name="Langford C.F."/>
            <person name="Leversha M.A."/>
            <person name="Lloyd C."/>
            <person name="Lloyd D.M."/>
            <person name="Martyn I.D."/>
            <person name="Mashreghi-Mohammadi M."/>
            <person name="Matthews L.H."/>
            <person name="Mccann O.T."/>
            <person name="Mcclay J."/>
            <person name="Mclaren S."/>
            <person name="McMurray A.A."/>
            <person name="Milne S.A."/>
            <person name="Mortimore B.J."/>
            <person name="Odell C.N."/>
            <person name="Pavitt R."/>
            <person name="Pearce A.V."/>
            <person name="Pearson D."/>
            <person name="Phillimore B.J.C.T."/>
            <person name="Phillips S.H."/>
            <person name="Plumb R.W."/>
            <person name="Ramsay H."/>
            <person name="Ramsey Y."/>
            <person name="Rogers L."/>
            <person name="Ross M.T."/>
            <person name="Scott C.E."/>
            <person name="Sehra H.K."/>
            <person name="Skuce C.D."/>
            <person name="Smalley S."/>
            <person name="Smith M.L."/>
            <person name="Soderlund C."/>
            <person name="Spragon L."/>
            <person name="Steward C.A."/>
            <person name="Sulston J.E."/>
            <person name="Swann R.M."/>
            <person name="Vaudin M."/>
            <person name="Wall M."/>
            <person name="Wallis J.M."/>
            <person name="Whiteley M.N."/>
            <person name="Willey D.L."/>
            <person name="Williams L."/>
            <person name="Williams S.A."/>
            <person name="Williamson H."/>
            <person name="Wilmer T.E."/>
            <person name="Wilming L."/>
            <person name="Wright C.L."/>
            <person name="Hubbard T."/>
            <person name="Bentley D.R."/>
            <person name="Beck S."/>
            <person name="Rogers J."/>
            <person name="Shimizu N."/>
            <person name="Minoshima S."/>
            <person name="Kawasaki K."/>
            <person name="Sasaki T."/>
            <person name="Asakawa S."/>
            <person name="Kudoh J."/>
            <person name="Shintani A."/>
            <person name="Shibuya K."/>
            <person name="Yoshizaki Y."/>
            <person name="Aoki N."/>
            <person name="Mitsuyama S."/>
            <person name="Roe B.A."/>
            <person name="Chen F."/>
            <person name="Chu L."/>
            <person name="Crabtree J."/>
            <person name="Deschamps S."/>
            <person name="Do A."/>
            <person name="Do T."/>
            <person name="Dorman A."/>
            <person name="Fang F."/>
            <person name="Fu Y."/>
            <person name="Hu P."/>
            <person name="Hua A."/>
            <person name="Kenton S."/>
            <person name="Lai H."/>
            <person name="Lao H.I."/>
            <person name="Lewis J."/>
            <person name="Lewis S."/>
            <person name="Lin S.-P."/>
            <person name="Loh P."/>
            <person name="Malaj E."/>
            <person name="Nguyen T."/>
            <person name="Pan H."/>
            <person name="Phan S."/>
            <person name="Qi S."/>
            <person name="Qian Y."/>
            <person name="Ray L."/>
            <person name="Ren Q."/>
            <person name="Shaull S."/>
            <person name="Sloan D."/>
            <person name="Song L."/>
            <person name="Wang Q."/>
            <person name="Wang Y."/>
            <person name="Wang Z."/>
            <person name="White J."/>
            <person name="Willingham D."/>
            <person name="Wu H."/>
            <person name="Yao Z."/>
            <person name="Zhan M."/>
            <person name="Zhang G."/>
            <person name="Chissoe S."/>
            <person name="Murray J."/>
            <person name="Miller N."/>
            <person name="Minx P."/>
            <person name="Fulton R."/>
            <person name="Johnson D."/>
            <person name="Bemis G."/>
            <person name="Bentley D."/>
            <person name="Bradshaw H."/>
            <person name="Bourne S."/>
            <person name="Cordes M."/>
            <person name="Du Z."/>
            <person name="Fulton L."/>
            <person name="Goela D."/>
            <person name="Graves T."/>
            <person name="Hawkins J."/>
            <person name="Hinds K."/>
            <person name="Kemp K."/>
            <person name="Latreille P."/>
            <person name="Layman D."/>
            <person name="Ozersky P."/>
            <person name="Rohlfing T."/>
            <person name="Scheet P."/>
            <person name="Walker C."/>
            <person name="Wamsley A."/>
            <person name="Wohldmann P."/>
            <person name="Pepin K."/>
            <person name="Nelson J."/>
            <person name="Korf I."/>
            <person name="Bedell J.A."/>
            <person name="Hillier L.W."/>
            <person name="Mardis E."/>
            <person name="Waterston R."/>
            <person name="Wilson R."/>
            <person name="Emanuel B.S."/>
            <person name="Shaikh T."/>
            <person name="Kurahashi H."/>
            <person name="Saitta S."/>
            <person name="Budarf M.L."/>
            <person name="McDermid H.E."/>
            <person name="Johnson A."/>
            <person name="Wong A.C.C."/>
            <person name="Morrow B.E."/>
            <person name="Edelmann L."/>
            <person name="Kim U.J."/>
            <person name="Shizuya H."/>
            <person name="Simon M.I."/>
            <person name="Dumanski J.P."/>
            <person name="Peyrard M."/>
            <person name="Kedra D."/>
            <person name="Seroussi E."/>
            <person name="Fransson I."/>
            <person name="Tapia I."/>
            <person name="Bruder C.E."/>
            <person name="O'Brien K.P."/>
            <person name="Wilkinson P."/>
            <person name="Bodenteich A."/>
            <person name="Hartman K."/>
            <person name="Hu X."/>
            <person name="Khan A.S."/>
            <person name="Lane L."/>
            <person name="Tilahun Y."/>
            <person name="Wright H."/>
        </authorList>
    </citation>
    <scope>NUCLEOTIDE SEQUENCE [LARGE SCALE GENOMIC DNA]</scope>
</reference>
<reference key="4">
    <citation type="journal article" date="2004" name="Genome Res.">
        <title>The status, quality, and expansion of the NIH full-length cDNA project: the Mammalian Gene Collection (MGC).</title>
        <authorList>
            <consortium name="The MGC Project Team"/>
        </authorList>
    </citation>
    <scope>NUCLEOTIDE SEQUENCE [LARGE SCALE MRNA]</scope>
    <source>
        <tissue>Testis</tissue>
    </source>
</reference>
<keyword id="KW-1185">Reference proteome</keyword>
<evidence type="ECO:0000256" key="1">
    <source>
        <dbReference type="SAM" id="MobiDB-lite"/>
    </source>
</evidence>
<organism>
    <name type="scientific">Homo sapiens</name>
    <name type="common">Human</name>
    <dbReference type="NCBI Taxonomy" id="9606"/>
    <lineage>
        <taxon>Eukaryota</taxon>
        <taxon>Metazoa</taxon>
        <taxon>Chordata</taxon>
        <taxon>Craniata</taxon>
        <taxon>Vertebrata</taxon>
        <taxon>Euteleostomi</taxon>
        <taxon>Mammalia</taxon>
        <taxon>Eutheria</taxon>
        <taxon>Euarchontoglires</taxon>
        <taxon>Primates</taxon>
        <taxon>Haplorrhini</taxon>
        <taxon>Catarrhini</taxon>
        <taxon>Hominidae</taxon>
        <taxon>Homo</taxon>
    </lineage>
</organism>
<protein>
    <recommendedName>
        <fullName>Uncharacterized protein C22orf31</fullName>
    </recommendedName>
</protein>
<gene>
    <name type="primary">C22orf31</name>
</gene>
<accession>O95567</accession>
<accession>A0AV97</accession>
<dbReference type="EMBL" id="AL035364">
    <property type="protein sequence ID" value="CAA23017.1"/>
    <property type="molecule type" value="mRNA"/>
</dbReference>
<dbReference type="EMBL" id="CR456405">
    <property type="protein sequence ID" value="CAG30291.1"/>
    <property type="molecule type" value="mRNA"/>
</dbReference>
<dbReference type="EMBL" id="AL021393">
    <property type="status" value="NOT_ANNOTATED_CDS"/>
    <property type="molecule type" value="Genomic_DNA"/>
</dbReference>
<dbReference type="EMBL" id="BC074758">
    <property type="protein sequence ID" value="AAH74758.1"/>
    <property type="molecule type" value="mRNA"/>
</dbReference>
<dbReference type="EMBL" id="BC126262">
    <property type="protein sequence ID" value="AAI26263.1"/>
    <property type="molecule type" value="mRNA"/>
</dbReference>
<dbReference type="EMBL" id="BC126264">
    <property type="protein sequence ID" value="AAI26265.1"/>
    <property type="molecule type" value="mRNA"/>
</dbReference>
<dbReference type="CCDS" id="CCDS13848.1"/>
<dbReference type="RefSeq" id="NP_056185.1">
    <property type="nucleotide sequence ID" value="NM_015370.2"/>
</dbReference>
<dbReference type="BioGRID" id="117307">
    <property type="interactions" value="5"/>
</dbReference>
<dbReference type="FunCoup" id="O95567">
    <property type="interactions" value="3"/>
</dbReference>
<dbReference type="IntAct" id="O95567">
    <property type="interactions" value="3"/>
</dbReference>
<dbReference type="STRING" id="9606.ENSP00000216071"/>
<dbReference type="iPTMnet" id="O95567"/>
<dbReference type="PhosphoSitePlus" id="O95567"/>
<dbReference type="BioMuta" id="C22orf31"/>
<dbReference type="PaxDb" id="9606-ENSP00000216071"/>
<dbReference type="ProteomicsDB" id="50943"/>
<dbReference type="Antibodypedia" id="268">
    <property type="antibodies" value="92 antibodies from 15 providers"/>
</dbReference>
<dbReference type="DNASU" id="25770"/>
<dbReference type="Ensembl" id="ENST00000216071.5">
    <property type="protein sequence ID" value="ENSP00000216071.4"/>
    <property type="gene ID" value="ENSG00000100249.5"/>
</dbReference>
<dbReference type="GeneID" id="25770"/>
<dbReference type="KEGG" id="hsa:25770"/>
<dbReference type="MANE-Select" id="ENST00000216071.5">
    <property type="protein sequence ID" value="ENSP00000216071.4"/>
    <property type="RefSeq nucleotide sequence ID" value="NM_015370.2"/>
    <property type="RefSeq protein sequence ID" value="NP_056185.1"/>
</dbReference>
<dbReference type="UCSC" id="uc003aej.2">
    <property type="organism name" value="human"/>
</dbReference>
<dbReference type="AGR" id="HGNC:26931"/>
<dbReference type="CTD" id="25770"/>
<dbReference type="DisGeNET" id="25770"/>
<dbReference type="GeneCards" id="C22orf31"/>
<dbReference type="HGNC" id="HGNC:26931">
    <property type="gene designation" value="C22orf31"/>
</dbReference>
<dbReference type="HPA" id="ENSG00000100249">
    <property type="expression patterns" value="Group enriched (brain, parathyroid gland, testis)"/>
</dbReference>
<dbReference type="neXtProt" id="NX_O95567"/>
<dbReference type="OpenTargets" id="ENSG00000100249"/>
<dbReference type="PharmGKB" id="PA145149441"/>
<dbReference type="VEuPathDB" id="HostDB:ENSG00000100249"/>
<dbReference type="eggNOG" id="ENOG502T0JW">
    <property type="taxonomic scope" value="Eukaryota"/>
</dbReference>
<dbReference type="GeneTree" id="ENSGT00390000012489"/>
<dbReference type="HOGENOM" id="CLU_945074_0_0_1"/>
<dbReference type="InParanoid" id="O95567"/>
<dbReference type="OMA" id="CCPAPCK"/>
<dbReference type="OrthoDB" id="8417148at2759"/>
<dbReference type="PAN-GO" id="O95567">
    <property type="GO annotations" value="0 GO annotations based on evolutionary models"/>
</dbReference>
<dbReference type="PhylomeDB" id="O95567"/>
<dbReference type="TreeFam" id="TF342260"/>
<dbReference type="PathwayCommons" id="O95567"/>
<dbReference type="SignaLink" id="O95567"/>
<dbReference type="BioGRID-ORCS" id="25770">
    <property type="hits" value="12 hits in 1120 CRISPR screens"/>
</dbReference>
<dbReference type="ChiTaRS" id="C22orf31">
    <property type="organism name" value="human"/>
</dbReference>
<dbReference type="GenomeRNAi" id="25770"/>
<dbReference type="Pharos" id="O95567">
    <property type="development level" value="Tdark"/>
</dbReference>
<dbReference type="PRO" id="PR:O95567"/>
<dbReference type="Proteomes" id="UP000005640">
    <property type="component" value="Chromosome 22"/>
</dbReference>
<dbReference type="RNAct" id="O95567">
    <property type="molecule type" value="protein"/>
</dbReference>
<dbReference type="Bgee" id="ENSG00000100249">
    <property type="expression patterns" value="Expressed in male germ line stem cell (sensu Vertebrata) in testis and 123 other cell types or tissues"/>
</dbReference>
<dbReference type="InterPro" id="IPR028970">
    <property type="entry name" value="DUF4662"/>
</dbReference>
<dbReference type="PANTHER" id="PTHR15578:SF0">
    <property type="entry name" value="CHROMOSOME 22 OPEN READING FRAME 31"/>
    <property type="match status" value="1"/>
</dbReference>
<dbReference type="PANTHER" id="PTHR15578">
    <property type="entry name" value="CHROMOSOME 8 C22ORF31 HOMOLOG"/>
    <property type="match status" value="1"/>
</dbReference>
<dbReference type="Pfam" id="PF15578">
    <property type="entry name" value="DUF4662"/>
    <property type="match status" value="1"/>
</dbReference>
<name>CV031_HUMAN</name>
<proteinExistence type="evidence at transcript level"/>
<feature type="chain" id="PRO_0000254057" description="Uncharacterized protein C22orf31">
    <location>
        <begin position="1"/>
        <end position="290"/>
    </location>
</feature>
<feature type="region of interest" description="Disordered" evidence="1">
    <location>
        <begin position="105"/>
        <end position="156"/>
    </location>
</feature>
<feature type="region of interest" description="Disordered" evidence="1">
    <location>
        <begin position="259"/>
        <end position="290"/>
    </location>
</feature>
<feature type="compositionally biased region" description="Polar residues" evidence="1">
    <location>
        <begin position="114"/>
        <end position="130"/>
    </location>
</feature>
<feature type="compositionally biased region" description="Basic and acidic residues" evidence="1">
    <location>
        <begin position="143"/>
        <end position="156"/>
    </location>
</feature>
<feature type="compositionally biased region" description="Basic and acidic residues" evidence="1">
    <location>
        <begin position="261"/>
        <end position="280"/>
    </location>
</feature>
<feature type="sequence variant" id="VAR_028808" description="In dbSNP:rs9625679.">
    <original>C</original>
    <variation>R</variation>
    <location>
        <position position="46"/>
    </location>
</feature>
<feature type="sequence variant" id="VAR_028809" description="In dbSNP:rs714136.">
    <original>T</original>
    <variation>R</variation>
    <location>
        <position position="210"/>
    </location>
</feature>